<sequence>MKEYIPGEIEPKWQKVWAESKVFETPQRSDKKKFYNLVMFPYPSGTLHVGHVKNYVIGDIVARYKRMKGYNVLHPFGYDAFGLPAENAAIKNKIHPEVWTFKNIDIIRNQIKKIGISYDWSREVITCTEEYYKWTQWIFLKLYENGLAYKKKAAVNWCPSCQTVLANEQVVDGKCERCGTEVTMKHLEQWYFKITDYAEKLLNDIDKLRGWPENVKIMQKNWIGKSTGAEIDFPVDRLDMKIKVFTTRPDTIWGVTFMAIAPESPLVEMLVTDERKDELSQFLKKVSLEDRFKRTSLEAEKEGFFLGRYAINPVTGEKIPIYVANYILYEYGTGAIMAVPAHDQRDFDFAKKYGISIRVVIDNPEESIDVEKMEKAYEEEGIMVNSGPFNGMRSTLALEKIIEYLEEKGIGKRSVQYKLRDWLISRQRYWGAPIPIVYCEKCGIVPVPEKDLPVKLPKDVEFLPTGQSPLSLDEQFLNTTCPKCGGPAKREADTMDTFVDSSWYYLRYINPKLEDKPFDTEDINYWMPVDQYIGGVEHAVLHLLYSRFITKVLYDLGYLKFEEPFENLFTQGMIYKDGWKMSKSKGNVVSPDEMIEKYGADTLRTYILFMAPPEKDAEWSDAGIEGVNRFLKRLWNNIYSILPRIKDVKVEKIELKNKQEKDLRRKLHQSIKKITEDIEGGFKFNTAIAGLMELNNNLSEYLNSAKDLNLPLLRELVEKLTLILSPFAPHMAEEIWHDLGNDTLVVNEEWPAYDENALKVDEVTVIIQINGKVRGKIQTKVDVSEGEIKKLAFENAKIASYVDGREIVKVIYVKNKLLNIVVK</sequence>
<name>SYL_THEM4</name>
<organism>
    <name type="scientific">Thermosipho melanesiensis (strain DSM 12029 / CIP 104789 / BI429)</name>
    <dbReference type="NCBI Taxonomy" id="391009"/>
    <lineage>
        <taxon>Bacteria</taxon>
        <taxon>Thermotogati</taxon>
        <taxon>Thermotogota</taxon>
        <taxon>Thermotogae</taxon>
        <taxon>Thermotogales</taxon>
        <taxon>Fervidobacteriaceae</taxon>
        <taxon>Thermosipho</taxon>
    </lineage>
</organism>
<dbReference type="EC" id="6.1.1.4" evidence="1"/>
<dbReference type="EMBL" id="CP000716">
    <property type="protein sequence ID" value="ABR30130.1"/>
    <property type="molecule type" value="Genomic_DNA"/>
</dbReference>
<dbReference type="RefSeq" id="WP_012056491.1">
    <property type="nucleotide sequence ID" value="NC_009616.1"/>
</dbReference>
<dbReference type="SMR" id="A6LJM9"/>
<dbReference type="STRING" id="391009.Tmel_0256"/>
<dbReference type="KEGG" id="tme:Tmel_0256"/>
<dbReference type="eggNOG" id="COG0495">
    <property type="taxonomic scope" value="Bacteria"/>
</dbReference>
<dbReference type="HOGENOM" id="CLU_004427_0_0_0"/>
<dbReference type="OrthoDB" id="9810365at2"/>
<dbReference type="Proteomes" id="UP000001110">
    <property type="component" value="Chromosome"/>
</dbReference>
<dbReference type="GO" id="GO:0005829">
    <property type="term" value="C:cytosol"/>
    <property type="evidence" value="ECO:0007669"/>
    <property type="project" value="TreeGrafter"/>
</dbReference>
<dbReference type="GO" id="GO:0002161">
    <property type="term" value="F:aminoacyl-tRNA deacylase activity"/>
    <property type="evidence" value="ECO:0007669"/>
    <property type="project" value="InterPro"/>
</dbReference>
<dbReference type="GO" id="GO:0005524">
    <property type="term" value="F:ATP binding"/>
    <property type="evidence" value="ECO:0007669"/>
    <property type="project" value="UniProtKB-UniRule"/>
</dbReference>
<dbReference type="GO" id="GO:0004823">
    <property type="term" value="F:leucine-tRNA ligase activity"/>
    <property type="evidence" value="ECO:0007669"/>
    <property type="project" value="UniProtKB-UniRule"/>
</dbReference>
<dbReference type="GO" id="GO:0006429">
    <property type="term" value="P:leucyl-tRNA aminoacylation"/>
    <property type="evidence" value="ECO:0007669"/>
    <property type="project" value="UniProtKB-UniRule"/>
</dbReference>
<dbReference type="CDD" id="cd07958">
    <property type="entry name" value="Anticodon_Ia_Leu_BEm"/>
    <property type="match status" value="1"/>
</dbReference>
<dbReference type="CDD" id="cd00812">
    <property type="entry name" value="LeuRS_core"/>
    <property type="match status" value="1"/>
</dbReference>
<dbReference type="FunFam" id="3.40.50.620:FF:000003">
    <property type="entry name" value="Leucine--tRNA ligase"/>
    <property type="match status" value="1"/>
</dbReference>
<dbReference type="FunFam" id="3.40.50.620:FF:000212">
    <property type="entry name" value="Leucine--tRNA ligase"/>
    <property type="match status" value="1"/>
</dbReference>
<dbReference type="FunFam" id="1.10.730.10:FF:000011">
    <property type="entry name" value="Leucine--tRNA ligase chloroplastic/mitochondrial"/>
    <property type="match status" value="1"/>
</dbReference>
<dbReference type="Gene3D" id="3.10.20.590">
    <property type="match status" value="1"/>
</dbReference>
<dbReference type="Gene3D" id="3.40.50.620">
    <property type="entry name" value="HUPs"/>
    <property type="match status" value="2"/>
</dbReference>
<dbReference type="Gene3D" id="1.10.730.10">
    <property type="entry name" value="Isoleucyl-tRNA Synthetase, Domain 1"/>
    <property type="match status" value="1"/>
</dbReference>
<dbReference type="HAMAP" id="MF_00049_B">
    <property type="entry name" value="Leu_tRNA_synth_B"/>
    <property type="match status" value="1"/>
</dbReference>
<dbReference type="InterPro" id="IPR001412">
    <property type="entry name" value="aa-tRNA-synth_I_CS"/>
</dbReference>
<dbReference type="InterPro" id="IPR002300">
    <property type="entry name" value="aa-tRNA-synth_Ia"/>
</dbReference>
<dbReference type="InterPro" id="IPR002302">
    <property type="entry name" value="Leu-tRNA-ligase"/>
</dbReference>
<dbReference type="InterPro" id="IPR025709">
    <property type="entry name" value="Leu_tRNA-synth_edit"/>
</dbReference>
<dbReference type="InterPro" id="IPR013155">
    <property type="entry name" value="M/V/L/I-tRNA-synth_anticd-bd"/>
</dbReference>
<dbReference type="InterPro" id="IPR015413">
    <property type="entry name" value="Methionyl/Leucyl_tRNA_Synth"/>
</dbReference>
<dbReference type="InterPro" id="IPR014729">
    <property type="entry name" value="Rossmann-like_a/b/a_fold"/>
</dbReference>
<dbReference type="InterPro" id="IPR009080">
    <property type="entry name" value="tRNAsynth_Ia_anticodon-bd"/>
</dbReference>
<dbReference type="InterPro" id="IPR009008">
    <property type="entry name" value="Val/Leu/Ile-tRNA-synth_edit"/>
</dbReference>
<dbReference type="NCBIfam" id="TIGR00396">
    <property type="entry name" value="leuS_bact"/>
    <property type="match status" value="1"/>
</dbReference>
<dbReference type="PANTHER" id="PTHR43740:SF2">
    <property type="entry name" value="LEUCINE--TRNA LIGASE, MITOCHONDRIAL"/>
    <property type="match status" value="1"/>
</dbReference>
<dbReference type="PANTHER" id="PTHR43740">
    <property type="entry name" value="LEUCYL-TRNA SYNTHETASE"/>
    <property type="match status" value="1"/>
</dbReference>
<dbReference type="Pfam" id="PF08264">
    <property type="entry name" value="Anticodon_1"/>
    <property type="match status" value="1"/>
</dbReference>
<dbReference type="Pfam" id="PF00133">
    <property type="entry name" value="tRNA-synt_1"/>
    <property type="match status" value="1"/>
</dbReference>
<dbReference type="Pfam" id="PF13603">
    <property type="entry name" value="tRNA-synt_1_2"/>
    <property type="match status" value="1"/>
</dbReference>
<dbReference type="Pfam" id="PF09334">
    <property type="entry name" value="tRNA-synt_1g"/>
    <property type="match status" value="1"/>
</dbReference>
<dbReference type="PRINTS" id="PR00985">
    <property type="entry name" value="TRNASYNTHLEU"/>
</dbReference>
<dbReference type="SUPFAM" id="SSF47323">
    <property type="entry name" value="Anticodon-binding domain of a subclass of class I aminoacyl-tRNA synthetases"/>
    <property type="match status" value="1"/>
</dbReference>
<dbReference type="SUPFAM" id="SSF52374">
    <property type="entry name" value="Nucleotidylyl transferase"/>
    <property type="match status" value="1"/>
</dbReference>
<dbReference type="SUPFAM" id="SSF50677">
    <property type="entry name" value="ValRS/IleRS/LeuRS editing domain"/>
    <property type="match status" value="1"/>
</dbReference>
<dbReference type="PROSITE" id="PS00178">
    <property type="entry name" value="AA_TRNA_LIGASE_I"/>
    <property type="match status" value="1"/>
</dbReference>
<keyword id="KW-0030">Aminoacyl-tRNA synthetase</keyword>
<keyword id="KW-0067">ATP-binding</keyword>
<keyword id="KW-0963">Cytoplasm</keyword>
<keyword id="KW-0436">Ligase</keyword>
<keyword id="KW-0547">Nucleotide-binding</keyword>
<keyword id="KW-0648">Protein biosynthesis</keyword>
<gene>
    <name evidence="1" type="primary">leuS</name>
    <name type="ordered locus">Tmel_0256</name>
</gene>
<feature type="chain" id="PRO_1000071115" description="Leucine--tRNA ligase">
    <location>
        <begin position="1"/>
        <end position="823"/>
    </location>
</feature>
<feature type="short sequence motif" description="'HIGH' region">
    <location>
        <begin position="41"/>
        <end position="51"/>
    </location>
</feature>
<feature type="short sequence motif" description="'KMSKS' region">
    <location>
        <begin position="580"/>
        <end position="584"/>
    </location>
</feature>
<feature type="binding site" evidence="1">
    <location>
        <position position="583"/>
    </location>
    <ligand>
        <name>ATP</name>
        <dbReference type="ChEBI" id="CHEBI:30616"/>
    </ligand>
</feature>
<reference key="1">
    <citation type="submission" date="2007-05" db="EMBL/GenBank/DDBJ databases">
        <title>Complete sequence of Thermosipho melanesiensis BI429.</title>
        <authorList>
            <consortium name="US DOE Joint Genome Institute"/>
            <person name="Copeland A."/>
            <person name="Lucas S."/>
            <person name="Lapidus A."/>
            <person name="Barry K."/>
            <person name="Glavina del Rio T."/>
            <person name="Dalin E."/>
            <person name="Tice H."/>
            <person name="Pitluck S."/>
            <person name="Chertkov O."/>
            <person name="Brettin T."/>
            <person name="Bruce D."/>
            <person name="Detter J.C."/>
            <person name="Han C."/>
            <person name="Schmutz J."/>
            <person name="Larimer F."/>
            <person name="Land M."/>
            <person name="Hauser L."/>
            <person name="Kyrpides N."/>
            <person name="Mikhailova N."/>
            <person name="Nelson K."/>
            <person name="Gogarten J.P."/>
            <person name="Noll K."/>
            <person name="Richardson P."/>
        </authorList>
    </citation>
    <scope>NUCLEOTIDE SEQUENCE [LARGE SCALE GENOMIC DNA]</scope>
    <source>
        <strain>DSM 12029 / CIP 104789 / BI429</strain>
    </source>
</reference>
<proteinExistence type="inferred from homology"/>
<accession>A6LJM9</accession>
<comment type="catalytic activity">
    <reaction evidence="1">
        <text>tRNA(Leu) + L-leucine + ATP = L-leucyl-tRNA(Leu) + AMP + diphosphate</text>
        <dbReference type="Rhea" id="RHEA:11688"/>
        <dbReference type="Rhea" id="RHEA-COMP:9613"/>
        <dbReference type="Rhea" id="RHEA-COMP:9622"/>
        <dbReference type="ChEBI" id="CHEBI:30616"/>
        <dbReference type="ChEBI" id="CHEBI:33019"/>
        <dbReference type="ChEBI" id="CHEBI:57427"/>
        <dbReference type="ChEBI" id="CHEBI:78442"/>
        <dbReference type="ChEBI" id="CHEBI:78494"/>
        <dbReference type="ChEBI" id="CHEBI:456215"/>
        <dbReference type="EC" id="6.1.1.4"/>
    </reaction>
</comment>
<comment type="subcellular location">
    <subcellularLocation>
        <location evidence="1">Cytoplasm</location>
    </subcellularLocation>
</comment>
<comment type="similarity">
    <text evidence="1">Belongs to the class-I aminoacyl-tRNA synthetase family.</text>
</comment>
<protein>
    <recommendedName>
        <fullName evidence="1">Leucine--tRNA ligase</fullName>
        <ecNumber evidence="1">6.1.1.4</ecNumber>
    </recommendedName>
    <alternativeName>
        <fullName evidence="1">Leucyl-tRNA synthetase</fullName>
        <shortName evidence="1">LeuRS</shortName>
    </alternativeName>
</protein>
<evidence type="ECO:0000255" key="1">
    <source>
        <dbReference type="HAMAP-Rule" id="MF_00049"/>
    </source>
</evidence>